<proteinExistence type="evidence at protein level"/>
<keyword id="KW-0025">Alternative splicing</keyword>
<keyword id="KW-1003">Cell membrane</keyword>
<keyword id="KW-0966">Cell projection</keyword>
<keyword id="KW-1186">Ciliopathy</keyword>
<keyword id="KW-0969">Cilium</keyword>
<keyword id="KW-0175">Coiled coil</keyword>
<keyword id="KW-0963">Cytoplasm</keyword>
<keyword id="KW-0206">Cytoskeleton</keyword>
<keyword id="KW-0225">Disease variant</keyword>
<keyword id="KW-0242">Dwarfism</keyword>
<keyword id="KW-0038">Ectodermal dysplasia</keyword>
<keyword id="KW-0325">Glycoprotein</keyword>
<keyword id="KW-0472">Membrane</keyword>
<keyword id="KW-0539">Nucleus</keyword>
<keyword id="KW-1267">Proteomics identification</keyword>
<keyword id="KW-1185">Reference proteome</keyword>
<keyword id="KW-0732">Signal</keyword>
<keyword id="KW-0812">Transmembrane</keyword>
<keyword id="KW-1133">Transmembrane helix</keyword>
<feature type="signal peptide" evidence="2">
    <location>
        <begin position="1"/>
        <end position="26"/>
    </location>
</feature>
<feature type="chain" id="PRO_0000084363" description="Limbin">
    <location>
        <begin position="27"/>
        <end position="1308"/>
    </location>
</feature>
<feature type="topological domain" description="Extracellular" evidence="2">
    <location>
        <begin position="27"/>
        <end position="300"/>
    </location>
</feature>
<feature type="transmembrane region" description="Helical" evidence="2">
    <location>
        <begin position="301"/>
        <end position="321"/>
    </location>
</feature>
<feature type="topological domain" description="Cytoplasmic" evidence="2">
    <location>
        <begin position="322"/>
        <end position="1308"/>
    </location>
</feature>
<feature type="region of interest" description="Disordered" evidence="3">
    <location>
        <begin position="36"/>
        <end position="76"/>
    </location>
</feature>
<feature type="region of interest" description="Disordered" evidence="3">
    <location>
        <begin position="784"/>
        <end position="816"/>
    </location>
</feature>
<feature type="coiled-coil region" evidence="2">
    <location>
        <begin position="455"/>
        <end position="578"/>
    </location>
</feature>
<feature type="coiled-coil region" evidence="2">
    <location>
        <begin position="636"/>
        <end position="800"/>
    </location>
</feature>
<feature type="coiled-coil region" evidence="2">
    <location>
        <begin position="1001"/>
        <end position="1113"/>
    </location>
</feature>
<feature type="compositionally biased region" description="Basic and acidic residues" evidence="3">
    <location>
        <begin position="784"/>
        <end position="801"/>
    </location>
</feature>
<feature type="glycosylation site" description="N-linked (GlcNAc...) asparagine" evidence="2">
    <location>
        <position position="220"/>
    </location>
</feature>
<feature type="splice variant" id="VSP_008848" description="In isoform 2." evidence="8">
    <location>
        <begin position="1"/>
        <end position="80"/>
    </location>
</feature>
<feature type="splice variant" id="VSP_008849" description="In isoform 3." evidence="9">
    <original>SILKKTCLPLRERMIFSGKGSWPHLSLEPIGELAPVPIVGAETIDLLNTGEKLFIFRNPKEPEISLHVPPRKKKNFLNAKKAMRALGMD</original>
    <variation>RSGNQESFWQYLVGTPEIGLIEWMSEK</variation>
    <location>
        <begin position="1220"/>
        <end position="1308"/>
    </location>
</feature>
<feature type="sequence variant" id="VAR_051089" description="In dbSNP:rs4689278.">
    <original>S</original>
    <variation>G</variation>
    <location>
        <position position="230"/>
    </location>
</feature>
<feature type="sequence variant" id="VAR_017209" description="In EVC; dbSNP:rs137852926." evidence="5">
    <original>I</original>
    <variation>R</variation>
    <location>
        <position position="283"/>
    </location>
</feature>
<feature type="sequence variant" id="VAR_035933" description="In a colorectal cancer sample; somatic mutation." evidence="7">
    <original>A</original>
    <variation>S</variation>
    <location>
        <position position="630"/>
    </location>
</feature>
<feature type="sequence variant" id="VAR_017210" description="In dbSNP:rs730469.">
    <original>T</original>
    <variation>A</variation>
    <location>
        <position position="699"/>
    </location>
</feature>
<feature type="sequence variant" id="VAR_017211" description="In EVC; dbSNP:rs137852928." evidence="4">
    <original>R</original>
    <variation>W</variation>
    <location>
        <position position="950"/>
    </location>
</feature>
<feature type="sequence variant" id="VAR_035934" description="In a colorectal cancer sample; somatic mutation." evidence="7">
    <original>L</original>
    <variation>V</variation>
    <location>
        <position position="994"/>
    </location>
</feature>
<feature type="sequence conflict" description="In Ref. 3; AAN86577." evidence="10" ref="3">
    <original>L</original>
    <variation>W</variation>
    <location>
        <position position="1106"/>
    </location>
</feature>
<reference key="1">
    <citation type="journal article" date="2002" name="Proc. Natl. Acad. Sci. U.S.A.">
        <title>Positional cloning of the gene LIMBIN responsible for bovine chondrodysplastic dwarfism.</title>
        <authorList>
            <person name="Takeda H."/>
            <person name="Takami M."/>
            <person name="Oguni T."/>
            <person name="Tsuji T."/>
            <person name="Yoneda K."/>
            <person name="Sato H."/>
            <person name="Ihara N."/>
            <person name="Itoh T."/>
            <person name="Kata S.R."/>
            <person name="Mishina Y."/>
            <person name="Womack J.E."/>
            <person name="Moritomo Y."/>
            <person name="Sugimoto Y."/>
            <person name="Kunieda T."/>
        </authorList>
    </citation>
    <scope>NUCLEOTIDE SEQUENCE [MRNA] (ISOFORM 2)</scope>
    <source>
        <tissue>Kidney</tissue>
    </source>
</reference>
<reference key="2">
    <citation type="journal article" date="2003" name="Am. J. Hum. Genet.">
        <title>Mutations in two nonhomologous genes in a head-to-head configuration cause Ellis-van Creveld syndrome.</title>
        <authorList>
            <person name="Ruiz-Perez V.L."/>
            <person name="Tompson S.W.J."/>
            <person name="Blair H.J."/>
            <person name="Espinoza-Valdez C."/>
            <person name="Lapunzina P."/>
            <person name="Silva E.O."/>
            <person name="Hamel B.C.J."/>
            <person name="Gibbs J.L."/>
            <person name="Young I.D."/>
            <person name="Wright M.J."/>
            <person name="Goodship J.A."/>
        </authorList>
    </citation>
    <scope>NUCLEOTIDE SEQUENCE [MRNA] (ISOFORM 1)</scope>
    <scope>VARIANT EVC ARG-283</scope>
</reference>
<reference key="3">
    <citation type="journal article" date="2002" name="Mol. Genet. Metab.">
        <title>A new gene, EVC2, is mutated in Ellis-van Creveld syndrome.</title>
        <authorList>
            <person name="Galdzicka M."/>
            <person name="Patnala S."/>
            <person name="Hirshman M.G."/>
            <person name="Cai J.-F."/>
            <person name="Nitowsky H."/>
            <person name="Egeland J.A."/>
            <person name="Ginns E.I."/>
        </authorList>
    </citation>
    <scope>NUCLEOTIDE SEQUENCE [MRNA] OF 75-1308 (ISOFORMS 1 AND 3)</scope>
    <scope>TISSUE SPECIFICITY</scope>
    <scope>VARIANT EVC TRP-950</scope>
</reference>
<reference key="4">
    <citation type="journal article" date="2006" name="Hum. Genet.">
        <title>A novel heterozygous deletion in the EVC2 gene causes Weyers acrofacial dysostosis.</title>
        <authorList>
            <person name="Ye X."/>
            <person name="Song G."/>
            <person name="Fan M."/>
            <person name="Shi L."/>
            <person name="Jabs E.W."/>
            <person name="Huang S."/>
            <person name="Guo R."/>
            <person name="Bian Z."/>
        </authorList>
    </citation>
    <scope>INVOLVEMENT IN WEYERS ACROFACIAL DYSOSTOSIS</scope>
</reference>
<reference key="5">
    <citation type="journal article" date="2006" name="Science">
        <title>The consensus coding sequences of human breast and colorectal cancers.</title>
        <authorList>
            <person name="Sjoeblom T."/>
            <person name="Jones S."/>
            <person name="Wood L.D."/>
            <person name="Parsons D.W."/>
            <person name="Lin J."/>
            <person name="Barber T.D."/>
            <person name="Mandelker D."/>
            <person name="Leary R.J."/>
            <person name="Ptak J."/>
            <person name="Silliman N."/>
            <person name="Szabo S."/>
            <person name="Buckhaults P."/>
            <person name="Farrell C."/>
            <person name="Meeh P."/>
            <person name="Markowitz S.D."/>
            <person name="Willis J."/>
            <person name="Dawson D."/>
            <person name="Willson J.K.V."/>
            <person name="Gazdar A.F."/>
            <person name="Hartigan J."/>
            <person name="Wu L."/>
            <person name="Liu C."/>
            <person name="Parmigiani G."/>
            <person name="Park B.H."/>
            <person name="Bachman K.E."/>
            <person name="Papadopoulos N."/>
            <person name="Vogelstein B."/>
            <person name="Kinzler K.W."/>
            <person name="Velculescu V.E."/>
        </authorList>
    </citation>
    <scope>VARIANTS [LARGE SCALE ANALYSIS] SER-630 AND VAL-994</scope>
</reference>
<protein>
    <recommendedName>
        <fullName>Limbin</fullName>
    </recommendedName>
    <alternativeName>
        <fullName>Ellis-van Creveld syndrome protein 2</fullName>
        <shortName>EVC2</shortName>
    </alternativeName>
</protein>
<comment type="function">
    <text evidence="1">Component of the EvC complex that positively regulates ciliary Hedgehog (Hh) signaling. Plays a critical role in bone formation and skeletal development. May be involved in early embryonic morphogenesis.</text>
</comment>
<comment type="subunit">
    <text evidence="1">Component of the EvC complex composed of EFCAB7, IQCE, EVC2 and EVC; built from two subcomplexes, EVC2:EVC and EFCAB7:IQCE. Interacts with EVC. Interacts (via N-terminal end) with EFCAB7. Interacts (via N-terminal end) with IQCE.</text>
</comment>
<comment type="subcellular location">
    <subcellularLocation>
        <location evidence="1">Cell membrane</location>
        <topology evidence="1">Single-pass type I membrane protein</topology>
    </subcellularLocation>
    <subcellularLocation>
        <location evidence="1">Cytoplasm</location>
        <location evidence="1">Cytoskeleton</location>
        <location evidence="1">Cilium basal body</location>
    </subcellularLocation>
    <subcellularLocation>
        <location evidence="1">Cell projection</location>
        <location evidence="1">Cilium</location>
    </subcellularLocation>
    <subcellularLocation>
        <location evidence="1">Cell projection</location>
        <location evidence="1">Cilium membrane</location>
    </subcellularLocation>
    <subcellularLocation>
        <location evidence="1">Nucleus</location>
    </subcellularLocation>
    <text evidence="1">The EvC complex localizes at the base of cilia in the EvC zone of primary cilia in a EFCAB7-dependent manner.</text>
</comment>
<comment type="alternative products">
    <event type="alternative splicing"/>
    <isoform>
        <id>Q86UK5-1</id>
        <name>1</name>
        <sequence type="displayed"/>
    </isoform>
    <isoform>
        <id>Q86UK5-2</id>
        <name>2</name>
        <sequence type="described" ref="VSP_008848"/>
    </isoform>
    <isoform>
        <id>Q86UK5-3</id>
        <name>3</name>
        <sequence type="described" ref="VSP_008849"/>
    </isoform>
    <text>Additional isoforms seem to exist.</text>
</comment>
<comment type="tissue specificity">
    <text evidence="4">Found in the heart, placenta, lung, liver, skeletal muscle, kidney and pancreas.</text>
</comment>
<comment type="disease" evidence="4 5">
    <disease id="DI-00449">
        <name>Ellis-van Creveld syndrome</name>
        <acronym>EVC</acronym>
        <description>An autosomal recessive condition characterized by the clinical tetrad of chondrodystrophy, polydactyly, ectodermal dysplasia and cardiac anomalies. Patients manifest short-limb dwarfism, short ribs, postaxial polydactyly, and dysplastic nails and teeth. Congenital heart defects, most commonly an atrioventricular septal defect, are observed in 60% of affected individuals.</description>
        <dbReference type="MIM" id="225500"/>
    </disease>
    <text>The disease is caused by variants affecting the gene represented in this entry.</text>
</comment>
<comment type="disease" evidence="6">
    <disease id="DI-00029">
        <name>Acrofacial dysostosis, Weyers type</name>
        <acronym>WAD</acronym>
        <description>An autosomal dominant condition characterized by dysplastic nails, postaxial polydactyly, dental anomalies, short limbs, short stature and normal intelligence. The phenotype is milder than Ellis-van Creveld syndrome.</description>
        <dbReference type="MIM" id="193530"/>
    </disease>
    <text>The disease is caused by variants affecting the gene represented in this entry.</text>
</comment>
<comment type="miscellaneous">
    <molecule>Isoform 3</molecule>
    <text evidence="10">May be produced at very low levels due to a premature stop codon in the mRNA, leading to nonsense-mediated mRNA decay.</text>
</comment>
<comment type="sequence caution" evidence="10">
    <conflict type="erroneous initiation">
        <sequence resource="EMBL-CDS" id="AAN86577"/>
    </conflict>
</comment>
<comment type="sequence caution" evidence="10">
    <conflict type="erroneous initiation">
        <sequence resource="EMBL-CDS" id="AAN86578"/>
    </conflict>
</comment>
<evidence type="ECO:0000250" key="1">
    <source>
        <dbReference type="UniProtKB" id="Q8K1G2"/>
    </source>
</evidence>
<evidence type="ECO:0000255" key="2"/>
<evidence type="ECO:0000256" key="3">
    <source>
        <dbReference type="SAM" id="MobiDB-lite"/>
    </source>
</evidence>
<evidence type="ECO:0000269" key="4">
    <source>
    </source>
</evidence>
<evidence type="ECO:0000269" key="5">
    <source>
    </source>
</evidence>
<evidence type="ECO:0000269" key="6">
    <source>
    </source>
</evidence>
<evidence type="ECO:0000269" key="7">
    <source>
    </source>
</evidence>
<evidence type="ECO:0000303" key="8">
    <source>
    </source>
</evidence>
<evidence type="ECO:0000303" key="9">
    <source>
    </source>
</evidence>
<evidence type="ECO:0000305" key="10"/>
<accession>Q86UK5</accession>
<accession>Q86YT3</accession>
<accession>Q86YT4</accession>
<accession>Q8NG49</accession>
<dbReference type="EMBL" id="AB083067">
    <property type="protein sequence ID" value="BAC06590.1"/>
    <property type="molecule type" value="mRNA"/>
</dbReference>
<dbReference type="EMBL" id="AY185210">
    <property type="protein sequence ID" value="AAO22066.1"/>
    <property type="molecule type" value="mRNA"/>
</dbReference>
<dbReference type="EMBL" id="AY152402">
    <property type="protein sequence ID" value="AAN86577.1"/>
    <property type="status" value="ALT_INIT"/>
    <property type="molecule type" value="mRNA"/>
</dbReference>
<dbReference type="EMBL" id="AY152403">
    <property type="protein sequence ID" value="AAN86578.1"/>
    <property type="status" value="ALT_INIT"/>
    <property type="molecule type" value="mRNA"/>
</dbReference>
<dbReference type="CCDS" id="CCDS3382.2">
    <molecule id="Q86UK5-1"/>
</dbReference>
<dbReference type="CCDS" id="CCDS54718.1">
    <molecule id="Q86UK5-2"/>
</dbReference>
<dbReference type="RefSeq" id="NP_001159608.1">
    <molecule id="Q86UK5-2"/>
    <property type="nucleotide sequence ID" value="NM_001166136.2"/>
</dbReference>
<dbReference type="RefSeq" id="NP_667338.3">
    <molecule id="Q86UK5-1"/>
    <property type="nucleotide sequence ID" value="NM_147127.4"/>
</dbReference>
<dbReference type="RefSeq" id="XP_016863225.1">
    <molecule id="Q86UK5-2"/>
    <property type="nucleotide sequence ID" value="XM_017007736.2"/>
</dbReference>
<dbReference type="RefSeq" id="XP_016863226.1">
    <property type="nucleotide sequence ID" value="XM_017007737.1"/>
</dbReference>
<dbReference type="RefSeq" id="XP_047305566.1">
    <molecule id="Q86UK5-2"/>
    <property type="nucleotide sequence ID" value="XM_047449610.1"/>
</dbReference>
<dbReference type="RefSeq" id="XP_054204907.1">
    <molecule id="Q86UK5-2"/>
    <property type="nucleotide sequence ID" value="XM_054348932.1"/>
</dbReference>
<dbReference type="RefSeq" id="XP_054204908.1">
    <molecule id="Q86UK5-2"/>
    <property type="nucleotide sequence ID" value="XM_054348933.1"/>
</dbReference>
<dbReference type="SMR" id="Q86UK5"/>
<dbReference type="BioGRID" id="126340">
    <property type="interactions" value="87"/>
</dbReference>
<dbReference type="FunCoup" id="Q86UK5">
    <property type="interactions" value="163"/>
</dbReference>
<dbReference type="IntAct" id="Q86UK5">
    <property type="interactions" value="84"/>
</dbReference>
<dbReference type="MINT" id="Q86UK5"/>
<dbReference type="STRING" id="9606.ENSP00000342144"/>
<dbReference type="GlyCosmos" id="Q86UK5">
    <property type="glycosylation" value="1 site, No reported glycans"/>
</dbReference>
<dbReference type="GlyGen" id="Q86UK5">
    <property type="glycosylation" value="1 site"/>
</dbReference>
<dbReference type="iPTMnet" id="Q86UK5"/>
<dbReference type="PhosphoSitePlus" id="Q86UK5"/>
<dbReference type="BioMuta" id="EVC2"/>
<dbReference type="DMDM" id="38257827"/>
<dbReference type="jPOST" id="Q86UK5"/>
<dbReference type="MassIVE" id="Q86UK5"/>
<dbReference type="PaxDb" id="9606-ENSP00000342144"/>
<dbReference type="PeptideAtlas" id="Q86UK5"/>
<dbReference type="Antibodypedia" id="22606">
    <property type="antibodies" value="126 antibodies from 29 providers"/>
</dbReference>
<dbReference type="DNASU" id="132884"/>
<dbReference type="Ensembl" id="ENST00000310917.6">
    <molecule id="Q86UK5-2"/>
    <property type="protein sequence ID" value="ENSP00000311683.2"/>
    <property type="gene ID" value="ENSG00000173040.13"/>
</dbReference>
<dbReference type="Ensembl" id="ENST00000344408.10">
    <molecule id="Q86UK5-1"/>
    <property type="protein sequence ID" value="ENSP00000342144.5"/>
    <property type="gene ID" value="ENSG00000173040.13"/>
</dbReference>
<dbReference type="GeneID" id="132884"/>
<dbReference type="KEGG" id="hsa:132884"/>
<dbReference type="MANE-Select" id="ENST00000344408.10">
    <property type="protein sequence ID" value="ENSP00000342144.5"/>
    <property type="RefSeq nucleotide sequence ID" value="NM_147127.5"/>
    <property type="RefSeq protein sequence ID" value="NP_667338.3"/>
</dbReference>
<dbReference type="UCSC" id="uc003gij.4">
    <molecule id="Q86UK5-1"/>
    <property type="organism name" value="human"/>
</dbReference>
<dbReference type="AGR" id="HGNC:19747"/>
<dbReference type="CTD" id="132884"/>
<dbReference type="DisGeNET" id="132884"/>
<dbReference type="GeneCards" id="EVC2"/>
<dbReference type="GeneReviews" id="EVC2"/>
<dbReference type="HGNC" id="HGNC:19747">
    <property type="gene designation" value="EVC2"/>
</dbReference>
<dbReference type="HPA" id="ENSG00000173040">
    <property type="expression patterns" value="Low tissue specificity"/>
</dbReference>
<dbReference type="MalaCards" id="EVC2"/>
<dbReference type="MIM" id="193530">
    <property type="type" value="phenotype"/>
</dbReference>
<dbReference type="MIM" id="225500">
    <property type="type" value="phenotype"/>
</dbReference>
<dbReference type="MIM" id="607261">
    <property type="type" value="gene"/>
</dbReference>
<dbReference type="neXtProt" id="NX_Q86UK5"/>
<dbReference type="OpenTargets" id="ENSG00000173040"/>
<dbReference type="Orphanet" id="952">
    <property type="disease" value="Acrofacial dysostosis, Weyers type"/>
</dbReference>
<dbReference type="Orphanet" id="289">
    <property type="disease" value="Ellis Van Creveld syndrome"/>
</dbReference>
<dbReference type="PharmGKB" id="PA134989044"/>
<dbReference type="VEuPathDB" id="HostDB:ENSG00000173040"/>
<dbReference type="eggNOG" id="ENOG502QQ5U">
    <property type="taxonomic scope" value="Eukaryota"/>
</dbReference>
<dbReference type="GeneTree" id="ENSGT00940000154127"/>
<dbReference type="HOGENOM" id="CLU_007621_0_0_1"/>
<dbReference type="InParanoid" id="Q86UK5"/>
<dbReference type="OMA" id="IFFAQIK"/>
<dbReference type="OrthoDB" id="8852462at2759"/>
<dbReference type="PAN-GO" id="Q86UK5">
    <property type="GO annotations" value="2 GO annotations based on evolutionary models"/>
</dbReference>
<dbReference type="PhylomeDB" id="Q86UK5"/>
<dbReference type="TreeFam" id="TF331379"/>
<dbReference type="PathwayCommons" id="Q86UK5"/>
<dbReference type="Reactome" id="R-HSA-5632684">
    <property type="pathway name" value="Hedgehog 'on' state"/>
</dbReference>
<dbReference type="Reactome" id="R-HSA-5635838">
    <property type="pathway name" value="Activation of SMO"/>
</dbReference>
<dbReference type="SignaLink" id="Q86UK5"/>
<dbReference type="BioGRID-ORCS" id="132884">
    <property type="hits" value="16 hits in 1148 CRISPR screens"/>
</dbReference>
<dbReference type="ChiTaRS" id="EVC2">
    <property type="organism name" value="human"/>
</dbReference>
<dbReference type="GenomeRNAi" id="132884"/>
<dbReference type="Pharos" id="Q86UK5">
    <property type="development level" value="Tbio"/>
</dbReference>
<dbReference type="PRO" id="PR:Q86UK5"/>
<dbReference type="Proteomes" id="UP000005640">
    <property type="component" value="Chromosome 4"/>
</dbReference>
<dbReference type="RNAct" id="Q86UK5">
    <property type="molecule type" value="protein"/>
</dbReference>
<dbReference type="Bgee" id="ENSG00000173040">
    <property type="expression patterns" value="Expressed in pancreatic ductal cell and 122 other cell types or tissues"/>
</dbReference>
<dbReference type="ExpressionAtlas" id="Q86UK5">
    <property type="expression patterns" value="baseline and differential"/>
</dbReference>
<dbReference type="GO" id="GO:0060170">
    <property type="term" value="C:ciliary membrane"/>
    <property type="evidence" value="ECO:0000318"/>
    <property type="project" value="GO_Central"/>
</dbReference>
<dbReference type="GO" id="GO:0005929">
    <property type="term" value="C:cilium"/>
    <property type="evidence" value="ECO:0000250"/>
    <property type="project" value="UniProtKB"/>
</dbReference>
<dbReference type="GO" id="GO:0005737">
    <property type="term" value="C:cytoplasm"/>
    <property type="evidence" value="ECO:0007669"/>
    <property type="project" value="UniProtKB-KW"/>
</dbReference>
<dbReference type="GO" id="GO:0005856">
    <property type="term" value="C:cytoskeleton"/>
    <property type="evidence" value="ECO:0007669"/>
    <property type="project" value="UniProtKB-KW"/>
</dbReference>
<dbReference type="GO" id="GO:0005634">
    <property type="term" value="C:nucleus"/>
    <property type="evidence" value="ECO:0007005"/>
    <property type="project" value="UniProtKB"/>
</dbReference>
<dbReference type="GO" id="GO:0098797">
    <property type="term" value="C:plasma membrane protein complex"/>
    <property type="evidence" value="ECO:0000318"/>
    <property type="project" value="GO_Central"/>
</dbReference>
<dbReference type="GO" id="GO:0007224">
    <property type="term" value="P:smoothened signaling pathway"/>
    <property type="evidence" value="ECO:0000250"/>
    <property type="project" value="UniProtKB"/>
</dbReference>
<dbReference type="InterPro" id="IPR022076">
    <property type="entry name" value="Limbin"/>
</dbReference>
<dbReference type="InterPro" id="IPR026501">
    <property type="entry name" value="Limbin/EVC"/>
</dbReference>
<dbReference type="PANTHER" id="PTHR16795:SF14">
    <property type="entry name" value="LIMBIN"/>
    <property type="match status" value="1"/>
</dbReference>
<dbReference type="PANTHER" id="PTHR16795">
    <property type="entry name" value="LIMBIN/ELLIS-VAN CREVELD PROTEIN"/>
    <property type="match status" value="1"/>
</dbReference>
<dbReference type="Pfam" id="PF12297">
    <property type="entry name" value="EVC2_like"/>
    <property type="match status" value="1"/>
</dbReference>
<sequence>MDPSGSRGRPTWVLAGGLLAVALALGGRGCLGASSRPRWRPLGAQPPRDPQVAPRSGPGLRIPPGRSGAGPESSTQDLPCMIWPKVECCHFKTAVEAPLGMKLDKKMEVFIPLSTSAASSGPWAHSLFAFIPSWPKKNLFKRESPITHRLYGDISREVQGTSENGVIFQKCALVSGSSEAQTARIWLLVNNTKTTSSANLSELLLLDSIAGLTIWDSVGNRTSEGFQAFSKKFLQVGDAFAVSYAATLQAGDLGNGESLKLPAQLTFQSSSRNRTQLKVLFSITAEENVTVLPHHGLHAAGFFIAFLLSLVLTWAALFLMVRYQCLKGNMLTRHRVWQYESKLEPLPFTSADGVNEDLSLNDQMIDILSSEDPGSMLQALEELEIATLNRADADLEACRTQISKDIIALLLKNLTSSGHLSPQVERKMSAVFKKQFLLLENEIQEEYDRKMVALTAECDLETRKKMENQYQREMMAMEEAEELLKRAGERSAVECSNLLRTLHGLEQEHLRKSLALQQEEDFAKAHRQLAVFQRNELHSIFFTQIKSAIFKGELKPEAAKMLLQNYSKIQENVEELMDFFQASKRYHLSKRFGHREYLVQNLQSSETRVQGLLSTAAAQLTHLIQKHERAGYLDEDQMEMLLERAQTEVFSIKQKLDNDLKQEKKKLHQKLITKRRRELLQKHREQRREQASVGEAFRTVEDAGQYLHQKRSLMEEHGATLEELQERLDQAALDDLRTLTLSLFEKATDELRRLQNSAMTQELLKRGVPWLFLQQILEEHGKEMAARAEQLEGEERDRDQEGVQSVRQRLKDDAPEAVTEEQAELRRWEHLIFMKLCSSVFSLSEEELLRMRQEVHGCFAQMDRSLALPKIRARVLLQQFQTAWREAEFVKLDQAVAAPELQQQSKVRKSRSKSKSKGELLKKCIEDKIHLCEEQASEDLVEKVRGELLRERVQRMEAQEGGFAQSLVALQFQKASRVTETLSAYTALLSIQDLLLEELSASEMLTKSACTQILESHSRELQELERKLEDQLVQQEAAQQQQALASWQQWVADGPGILNEPGEVDSERQVSTVLHQALSKSQTLLEQHQQCLREEQQNSVVLEDLLENMEADTFATLCSQELRLASYLARMAMVPGATLRRLLSVVLPTASQPQLLALLDSATERHVDHAAESDGGAEQADVGRRRKHQSWWQALDGKLRGDLISRGLEKMLWARKRKQSILKKTCLPLRERMIFSGKGSWPHLSLEPIGELAPVPIVGAETIDLLNTGEKLFIFRNPKEPEISLHVPPRKKKNFLNAKKAMRALGMD</sequence>
<gene>
    <name type="primary">EVC2</name>
    <name type="synonym">LBN</name>
</gene>
<organism>
    <name type="scientific">Homo sapiens</name>
    <name type="common">Human</name>
    <dbReference type="NCBI Taxonomy" id="9606"/>
    <lineage>
        <taxon>Eukaryota</taxon>
        <taxon>Metazoa</taxon>
        <taxon>Chordata</taxon>
        <taxon>Craniata</taxon>
        <taxon>Vertebrata</taxon>
        <taxon>Euteleostomi</taxon>
        <taxon>Mammalia</taxon>
        <taxon>Eutheria</taxon>
        <taxon>Euarchontoglires</taxon>
        <taxon>Primates</taxon>
        <taxon>Haplorrhini</taxon>
        <taxon>Catarrhini</taxon>
        <taxon>Hominidae</taxon>
        <taxon>Homo</taxon>
    </lineage>
</organism>
<name>LBN_HUMAN</name>